<sequence>MVQDLEQKLWSIASGIPFSSDYFLQASPIRKLKKENLFSKVFETYFLELGSGWGEVAISMALQRPNTGFILMEKKFDRIRHTIREIEKHSLDNVKILCVNFNWFLEEVFEENLFSEILLNFPDPWPKKRHHKKRTVNSKFLESLKILLPEKGKFYFATDYGPYARKIIRLFRDSKAFSPEKVELKSERNEIPVSHFERKKREEGKRIYYIDRVLVQK</sequence>
<proteinExistence type="inferred from homology"/>
<protein>
    <recommendedName>
        <fullName evidence="2">tRNA (guanine-N(7)-)-methyltransferase</fullName>
        <ecNumber evidence="2">2.1.1.33</ecNumber>
    </recommendedName>
    <alternativeName>
        <fullName evidence="2">tRNA (guanine(46)-N(7))-methyltransferase</fullName>
    </alternativeName>
    <alternativeName>
        <fullName evidence="2">tRNA(m7G46)-methyltransferase</fullName>
    </alternativeName>
</protein>
<dbReference type="EC" id="2.1.1.33" evidence="2"/>
<dbReference type="EMBL" id="AE016823">
    <property type="protein sequence ID" value="AAS68759.1"/>
    <property type="molecule type" value="Genomic_DNA"/>
</dbReference>
<dbReference type="RefSeq" id="WP_000249515.1">
    <property type="nucleotide sequence ID" value="NC_005823.1"/>
</dbReference>
<dbReference type="SMR" id="Q72W15"/>
<dbReference type="GeneID" id="61143481"/>
<dbReference type="KEGG" id="lic:LIC_10126"/>
<dbReference type="HOGENOM" id="CLU_050910_2_0_12"/>
<dbReference type="UniPathway" id="UPA00989"/>
<dbReference type="Proteomes" id="UP000007037">
    <property type="component" value="Chromosome I"/>
</dbReference>
<dbReference type="GO" id="GO:0043527">
    <property type="term" value="C:tRNA methyltransferase complex"/>
    <property type="evidence" value="ECO:0007669"/>
    <property type="project" value="TreeGrafter"/>
</dbReference>
<dbReference type="GO" id="GO:0008176">
    <property type="term" value="F:tRNA (guanine(46)-N7)-methyltransferase activity"/>
    <property type="evidence" value="ECO:0007669"/>
    <property type="project" value="UniProtKB-UniRule"/>
</dbReference>
<dbReference type="CDD" id="cd02440">
    <property type="entry name" value="AdoMet_MTases"/>
    <property type="match status" value="1"/>
</dbReference>
<dbReference type="FunFam" id="3.40.50.150:FF:000446">
    <property type="entry name" value="tRNA (guanine-N(7)-)-methyltransferase"/>
    <property type="match status" value="1"/>
</dbReference>
<dbReference type="Gene3D" id="3.40.50.150">
    <property type="entry name" value="Vaccinia Virus protein VP39"/>
    <property type="match status" value="1"/>
</dbReference>
<dbReference type="HAMAP" id="MF_01057">
    <property type="entry name" value="tRNA_methyltr_TrmB"/>
    <property type="match status" value="1"/>
</dbReference>
<dbReference type="InterPro" id="IPR029063">
    <property type="entry name" value="SAM-dependent_MTases_sf"/>
</dbReference>
<dbReference type="InterPro" id="IPR003358">
    <property type="entry name" value="tRNA_(Gua-N-7)_MeTrfase_Trmb"/>
</dbReference>
<dbReference type="InterPro" id="IPR055361">
    <property type="entry name" value="tRNA_methyltr_TrmB_bact"/>
</dbReference>
<dbReference type="NCBIfam" id="TIGR00091">
    <property type="entry name" value="tRNA (guanosine(46)-N7)-methyltransferase TrmB"/>
    <property type="match status" value="1"/>
</dbReference>
<dbReference type="PANTHER" id="PTHR23417">
    <property type="entry name" value="3-DEOXY-D-MANNO-OCTULOSONIC-ACID TRANSFERASE/TRNA GUANINE-N 7 - -METHYLTRANSFERASE"/>
    <property type="match status" value="1"/>
</dbReference>
<dbReference type="PANTHER" id="PTHR23417:SF14">
    <property type="entry name" value="PENTACOTRIPEPTIDE-REPEAT REGION OF PRORP DOMAIN-CONTAINING PROTEIN"/>
    <property type="match status" value="1"/>
</dbReference>
<dbReference type="Pfam" id="PF02390">
    <property type="entry name" value="Methyltransf_4"/>
    <property type="match status" value="1"/>
</dbReference>
<dbReference type="SUPFAM" id="SSF53335">
    <property type="entry name" value="S-adenosyl-L-methionine-dependent methyltransferases"/>
    <property type="match status" value="1"/>
</dbReference>
<dbReference type="PROSITE" id="PS51625">
    <property type="entry name" value="SAM_MT_TRMB"/>
    <property type="match status" value="1"/>
</dbReference>
<gene>
    <name evidence="2" type="primary">trmB</name>
    <name type="ordered locus">LIC_10126</name>
</gene>
<evidence type="ECO:0000250" key="1"/>
<evidence type="ECO:0000255" key="2">
    <source>
        <dbReference type="HAMAP-Rule" id="MF_01057"/>
    </source>
</evidence>
<keyword id="KW-0489">Methyltransferase</keyword>
<keyword id="KW-0949">S-adenosyl-L-methionine</keyword>
<keyword id="KW-0808">Transferase</keyword>
<keyword id="KW-0819">tRNA processing</keyword>
<feature type="chain" id="PRO_0000171341" description="tRNA (guanine-N(7)-)-methyltransferase">
    <location>
        <begin position="1"/>
        <end position="217"/>
    </location>
</feature>
<feature type="active site" evidence="1">
    <location>
        <position position="123"/>
    </location>
</feature>
<feature type="binding site" evidence="2">
    <location>
        <position position="48"/>
    </location>
    <ligand>
        <name>S-adenosyl-L-methionine</name>
        <dbReference type="ChEBI" id="CHEBI:59789"/>
    </ligand>
</feature>
<feature type="binding site" evidence="2">
    <location>
        <position position="73"/>
    </location>
    <ligand>
        <name>S-adenosyl-L-methionine</name>
        <dbReference type="ChEBI" id="CHEBI:59789"/>
    </ligand>
</feature>
<feature type="binding site" evidence="2">
    <location>
        <position position="100"/>
    </location>
    <ligand>
        <name>S-adenosyl-L-methionine</name>
        <dbReference type="ChEBI" id="CHEBI:59789"/>
    </ligand>
</feature>
<feature type="binding site" evidence="2">
    <location>
        <position position="123"/>
    </location>
    <ligand>
        <name>S-adenosyl-L-methionine</name>
        <dbReference type="ChEBI" id="CHEBI:59789"/>
    </ligand>
</feature>
<feature type="binding site" evidence="2">
    <location>
        <position position="127"/>
    </location>
    <ligand>
        <name>substrate</name>
    </ligand>
</feature>
<feature type="binding site" evidence="2">
    <location>
        <position position="159"/>
    </location>
    <ligand>
        <name>substrate</name>
    </ligand>
</feature>
<organism>
    <name type="scientific">Leptospira interrogans serogroup Icterohaemorrhagiae serovar copenhageni (strain Fiocruz L1-130)</name>
    <dbReference type="NCBI Taxonomy" id="267671"/>
    <lineage>
        <taxon>Bacteria</taxon>
        <taxon>Pseudomonadati</taxon>
        <taxon>Spirochaetota</taxon>
        <taxon>Spirochaetia</taxon>
        <taxon>Leptospirales</taxon>
        <taxon>Leptospiraceae</taxon>
        <taxon>Leptospira</taxon>
    </lineage>
</organism>
<name>TRMB_LEPIC</name>
<reference key="1">
    <citation type="journal article" date="2004" name="J. Bacteriol.">
        <title>Comparative genomics of two Leptospira interrogans serovars reveals novel insights into physiology and pathogenesis.</title>
        <authorList>
            <person name="Nascimento A.L.T.O."/>
            <person name="Ko A.I."/>
            <person name="Martins E.A.L."/>
            <person name="Monteiro-Vitorello C.B."/>
            <person name="Ho P.L."/>
            <person name="Haake D.A."/>
            <person name="Verjovski-Almeida S."/>
            <person name="Hartskeerl R.A."/>
            <person name="Marques M.V."/>
            <person name="Oliveira M.C."/>
            <person name="Menck C.F.M."/>
            <person name="Leite L.C.C."/>
            <person name="Carrer H."/>
            <person name="Coutinho L.L."/>
            <person name="Degrave W.M."/>
            <person name="Dellagostin O.A."/>
            <person name="El-Dorry H."/>
            <person name="Ferro E.S."/>
            <person name="Ferro M.I.T."/>
            <person name="Furlan L.R."/>
            <person name="Gamberini M."/>
            <person name="Giglioti E.A."/>
            <person name="Goes-Neto A."/>
            <person name="Goldman G.H."/>
            <person name="Goldman M.H.S."/>
            <person name="Harakava R."/>
            <person name="Jeronimo S.M.B."/>
            <person name="Junqueira-de-Azevedo I.L.M."/>
            <person name="Kimura E.T."/>
            <person name="Kuramae E.E."/>
            <person name="Lemos E.G.M."/>
            <person name="Lemos M.V.F."/>
            <person name="Marino C.L."/>
            <person name="Nunes L.R."/>
            <person name="de Oliveira R.C."/>
            <person name="Pereira G.G."/>
            <person name="Reis M.S."/>
            <person name="Schriefer A."/>
            <person name="Siqueira W.J."/>
            <person name="Sommer P."/>
            <person name="Tsai S.M."/>
            <person name="Simpson A.J.G."/>
            <person name="Ferro J.A."/>
            <person name="Camargo L.E.A."/>
            <person name="Kitajima J.P."/>
            <person name="Setubal J.C."/>
            <person name="Van Sluys M.A."/>
        </authorList>
    </citation>
    <scope>NUCLEOTIDE SEQUENCE [LARGE SCALE GENOMIC DNA]</scope>
    <source>
        <strain>Fiocruz L1-130</strain>
    </source>
</reference>
<accession>Q72W15</accession>
<comment type="function">
    <text evidence="2">Catalyzes the formation of N(7)-methylguanine at position 46 (m7G46) in tRNA.</text>
</comment>
<comment type="catalytic activity">
    <reaction evidence="2">
        <text>guanosine(46) in tRNA + S-adenosyl-L-methionine = N(7)-methylguanosine(46) in tRNA + S-adenosyl-L-homocysteine</text>
        <dbReference type="Rhea" id="RHEA:42708"/>
        <dbReference type="Rhea" id="RHEA-COMP:10188"/>
        <dbReference type="Rhea" id="RHEA-COMP:10189"/>
        <dbReference type="ChEBI" id="CHEBI:57856"/>
        <dbReference type="ChEBI" id="CHEBI:59789"/>
        <dbReference type="ChEBI" id="CHEBI:74269"/>
        <dbReference type="ChEBI" id="CHEBI:74480"/>
        <dbReference type="EC" id="2.1.1.33"/>
    </reaction>
</comment>
<comment type="pathway">
    <text evidence="2">tRNA modification; N(7)-methylguanine-tRNA biosynthesis.</text>
</comment>
<comment type="similarity">
    <text evidence="2">Belongs to the class I-like SAM-binding methyltransferase superfamily. TrmB family.</text>
</comment>